<name>RPOA_RHOP5</name>
<gene>
    <name evidence="1" type="primary">rpoA</name>
    <name type="ordered locus">RPE_3562</name>
</gene>
<evidence type="ECO:0000255" key="1">
    <source>
        <dbReference type="HAMAP-Rule" id="MF_00059"/>
    </source>
</evidence>
<reference key="1">
    <citation type="submission" date="2006-09" db="EMBL/GenBank/DDBJ databases">
        <title>Complete sequence of Rhodopseudomonas palustris BisA53.</title>
        <authorList>
            <consortium name="US DOE Joint Genome Institute"/>
            <person name="Copeland A."/>
            <person name="Lucas S."/>
            <person name="Lapidus A."/>
            <person name="Barry K."/>
            <person name="Detter J.C."/>
            <person name="Glavina del Rio T."/>
            <person name="Hammon N."/>
            <person name="Israni S."/>
            <person name="Dalin E."/>
            <person name="Tice H."/>
            <person name="Pitluck S."/>
            <person name="Chain P."/>
            <person name="Malfatti S."/>
            <person name="Shin M."/>
            <person name="Vergez L."/>
            <person name="Schmutz J."/>
            <person name="Larimer F."/>
            <person name="Land M."/>
            <person name="Hauser L."/>
            <person name="Pelletier D.A."/>
            <person name="Kyrpides N."/>
            <person name="Kim E."/>
            <person name="Harwood C.S."/>
            <person name="Oda Y."/>
            <person name="Richardson P."/>
        </authorList>
    </citation>
    <scope>NUCLEOTIDE SEQUENCE [LARGE SCALE GENOMIC DNA]</scope>
    <source>
        <strain>BisA53</strain>
    </source>
</reference>
<proteinExistence type="inferred from homology"/>
<accession>Q07KP2</accession>
<comment type="function">
    <text evidence="1">DNA-dependent RNA polymerase catalyzes the transcription of DNA into RNA using the four ribonucleoside triphosphates as substrates.</text>
</comment>
<comment type="catalytic activity">
    <reaction evidence="1">
        <text>RNA(n) + a ribonucleoside 5'-triphosphate = RNA(n+1) + diphosphate</text>
        <dbReference type="Rhea" id="RHEA:21248"/>
        <dbReference type="Rhea" id="RHEA-COMP:14527"/>
        <dbReference type="Rhea" id="RHEA-COMP:17342"/>
        <dbReference type="ChEBI" id="CHEBI:33019"/>
        <dbReference type="ChEBI" id="CHEBI:61557"/>
        <dbReference type="ChEBI" id="CHEBI:140395"/>
        <dbReference type="EC" id="2.7.7.6"/>
    </reaction>
</comment>
<comment type="subunit">
    <text evidence="1">Homodimer. The RNAP catalytic core consists of 2 alpha, 1 beta, 1 beta' and 1 omega subunit. When a sigma factor is associated with the core the holoenzyme is formed, which can initiate transcription.</text>
</comment>
<comment type="domain">
    <text evidence="1">The N-terminal domain is essential for RNAP assembly and basal transcription, whereas the C-terminal domain is involved in interaction with transcriptional regulators and with upstream promoter elements.</text>
</comment>
<comment type="similarity">
    <text evidence="1">Belongs to the RNA polymerase alpha chain family.</text>
</comment>
<sequence length="339" mass="37551">MTIQKNWQELIRPNKLQVTPGSDSGRFATLVAEPLERGFGQTLGNALRRVLLSSLQGAAVQSVHIDGVLHEFSSIAGVREDVTDIVLNIKDISIKMQGEGPKRMVVKKQGPGTVTAGDIQTVGDIVVLNPDLQICTLDDGAEIRMEFTVNTGKGYVAAERNRPEDAPIGLIPVDSLFSPVRKVSYKVENTREGQILDYDKLTMTIETNGAITPDDAVAYAARILQDQLNVFVNFEEPRKEVTQEIIPDLAFNPAFLKKVDELELSVRSANCLKNDNIVYIGDLVQKSEAEMLRTPNFGRKSLNEIKEVLAQMGLHLGMEVPGWPPENIDELAKRFEDHY</sequence>
<organism>
    <name type="scientific">Rhodopseudomonas palustris (strain BisA53)</name>
    <dbReference type="NCBI Taxonomy" id="316055"/>
    <lineage>
        <taxon>Bacteria</taxon>
        <taxon>Pseudomonadati</taxon>
        <taxon>Pseudomonadota</taxon>
        <taxon>Alphaproteobacteria</taxon>
        <taxon>Hyphomicrobiales</taxon>
        <taxon>Nitrobacteraceae</taxon>
        <taxon>Rhodopseudomonas</taxon>
    </lineage>
</organism>
<dbReference type="EC" id="2.7.7.6" evidence="1"/>
<dbReference type="EMBL" id="CP000463">
    <property type="protein sequence ID" value="ABJ07492.1"/>
    <property type="molecule type" value="Genomic_DNA"/>
</dbReference>
<dbReference type="SMR" id="Q07KP2"/>
<dbReference type="STRING" id="316055.RPE_3562"/>
<dbReference type="KEGG" id="rpe:RPE_3562"/>
<dbReference type="eggNOG" id="COG0202">
    <property type="taxonomic scope" value="Bacteria"/>
</dbReference>
<dbReference type="HOGENOM" id="CLU_053084_0_0_5"/>
<dbReference type="GO" id="GO:0005737">
    <property type="term" value="C:cytoplasm"/>
    <property type="evidence" value="ECO:0007669"/>
    <property type="project" value="UniProtKB-ARBA"/>
</dbReference>
<dbReference type="GO" id="GO:0000428">
    <property type="term" value="C:DNA-directed RNA polymerase complex"/>
    <property type="evidence" value="ECO:0007669"/>
    <property type="project" value="UniProtKB-KW"/>
</dbReference>
<dbReference type="GO" id="GO:0003677">
    <property type="term" value="F:DNA binding"/>
    <property type="evidence" value="ECO:0007669"/>
    <property type="project" value="UniProtKB-UniRule"/>
</dbReference>
<dbReference type="GO" id="GO:0003899">
    <property type="term" value="F:DNA-directed RNA polymerase activity"/>
    <property type="evidence" value="ECO:0007669"/>
    <property type="project" value="UniProtKB-UniRule"/>
</dbReference>
<dbReference type="GO" id="GO:0046983">
    <property type="term" value="F:protein dimerization activity"/>
    <property type="evidence" value="ECO:0007669"/>
    <property type="project" value="InterPro"/>
</dbReference>
<dbReference type="GO" id="GO:0006351">
    <property type="term" value="P:DNA-templated transcription"/>
    <property type="evidence" value="ECO:0007669"/>
    <property type="project" value="UniProtKB-UniRule"/>
</dbReference>
<dbReference type="CDD" id="cd06928">
    <property type="entry name" value="RNAP_alpha_NTD"/>
    <property type="match status" value="1"/>
</dbReference>
<dbReference type="FunFam" id="1.10.150.20:FF:000001">
    <property type="entry name" value="DNA-directed RNA polymerase subunit alpha"/>
    <property type="match status" value="1"/>
</dbReference>
<dbReference type="FunFam" id="2.170.120.12:FF:000001">
    <property type="entry name" value="DNA-directed RNA polymerase subunit alpha"/>
    <property type="match status" value="1"/>
</dbReference>
<dbReference type="Gene3D" id="1.10.150.20">
    <property type="entry name" value="5' to 3' exonuclease, C-terminal subdomain"/>
    <property type="match status" value="1"/>
</dbReference>
<dbReference type="Gene3D" id="2.170.120.12">
    <property type="entry name" value="DNA-directed RNA polymerase, insert domain"/>
    <property type="match status" value="1"/>
</dbReference>
<dbReference type="Gene3D" id="3.30.1360.10">
    <property type="entry name" value="RNA polymerase, RBP11-like subunit"/>
    <property type="match status" value="1"/>
</dbReference>
<dbReference type="HAMAP" id="MF_00059">
    <property type="entry name" value="RNApol_bact_RpoA"/>
    <property type="match status" value="1"/>
</dbReference>
<dbReference type="InterPro" id="IPR011262">
    <property type="entry name" value="DNA-dir_RNA_pol_insert"/>
</dbReference>
<dbReference type="InterPro" id="IPR011263">
    <property type="entry name" value="DNA-dir_RNA_pol_RpoA/D/Rpb3"/>
</dbReference>
<dbReference type="InterPro" id="IPR011773">
    <property type="entry name" value="DNA-dir_RpoA"/>
</dbReference>
<dbReference type="InterPro" id="IPR036603">
    <property type="entry name" value="RBP11-like"/>
</dbReference>
<dbReference type="InterPro" id="IPR011260">
    <property type="entry name" value="RNAP_asu_C"/>
</dbReference>
<dbReference type="InterPro" id="IPR036643">
    <property type="entry name" value="RNApol_insert_sf"/>
</dbReference>
<dbReference type="NCBIfam" id="NF003513">
    <property type="entry name" value="PRK05182.1-2"/>
    <property type="match status" value="1"/>
</dbReference>
<dbReference type="NCBIfam" id="NF003519">
    <property type="entry name" value="PRK05182.2-5"/>
    <property type="match status" value="1"/>
</dbReference>
<dbReference type="NCBIfam" id="TIGR02027">
    <property type="entry name" value="rpoA"/>
    <property type="match status" value="1"/>
</dbReference>
<dbReference type="Pfam" id="PF01000">
    <property type="entry name" value="RNA_pol_A_bac"/>
    <property type="match status" value="1"/>
</dbReference>
<dbReference type="Pfam" id="PF03118">
    <property type="entry name" value="RNA_pol_A_CTD"/>
    <property type="match status" value="1"/>
</dbReference>
<dbReference type="Pfam" id="PF01193">
    <property type="entry name" value="RNA_pol_L"/>
    <property type="match status" value="1"/>
</dbReference>
<dbReference type="SMART" id="SM00662">
    <property type="entry name" value="RPOLD"/>
    <property type="match status" value="1"/>
</dbReference>
<dbReference type="SUPFAM" id="SSF47789">
    <property type="entry name" value="C-terminal domain of RNA polymerase alpha subunit"/>
    <property type="match status" value="1"/>
</dbReference>
<dbReference type="SUPFAM" id="SSF56553">
    <property type="entry name" value="Insert subdomain of RNA polymerase alpha subunit"/>
    <property type="match status" value="1"/>
</dbReference>
<dbReference type="SUPFAM" id="SSF55257">
    <property type="entry name" value="RBP11-like subunits of RNA polymerase"/>
    <property type="match status" value="1"/>
</dbReference>
<keyword id="KW-0240">DNA-directed RNA polymerase</keyword>
<keyword id="KW-0548">Nucleotidyltransferase</keyword>
<keyword id="KW-0804">Transcription</keyword>
<keyword id="KW-0808">Transferase</keyword>
<protein>
    <recommendedName>
        <fullName evidence="1">DNA-directed RNA polymerase subunit alpha</fullName>
        <shortName evidence="1">RNAP subunit alpha</shortName>
        <ecNumber evidence="1">2.7.7.6</ecNumber>
    </recommendedName>
    <alternativeName>
        <fullName evidence="1">RNA polymerase subunit alpha</fullName>
    </alternativeName>
    <alternativeName>
        <fullName evidence="1">Transcriptase subunit alpha</fullName>
    </alternativeName>
</protein>
<feature type="chain" id="PRO_0000296862" description="DNA-directed RNA polymerase subunit alpha">
    <location>
        <begin position="1"/>
        <end position="339"/>
    </location>
</feature>
<feature type="region of interest" description="Alpha N-terminal domain (alpha-NTD)" evidence="1">
    <location>
        <begin position="1"/>
        <end position="235"/>
    </location>
</feature>
<feature type="region of interest" description="Alpha C-terminal domain (alpha-CTD)" evidence="1">
    <location>
        <begin position="251"/>
        <end position="339"/>
    </location>
</feature>